<reference key="1">
    <citation type="journal article" date="2003" name="PLoS Biol.">
        <title>The genome sequence of Caenorhabditis briggsae: a platform for comparative genomics.</title>
        <authorList>
            <person name="Stein L.D."/>
            <person name="Bao Z."/>
            <person name="Blasiar D."/>
            <person name="Blumenthal T."/>
            <person name="Brent M.R."/>
            <person name="Chen N."/>
            <person name="Chinwalla A."/>
            <person name="Clarke L."/>
            <person name="Clee C."/>
            <person name="Coghlan A."/>
            <person name="Coulson A."/>
            <person name="D'Eustachio P."/>
            <person name="Fitch D.H.A."/>
            <person name="Fulton L.A."/>
            <person name="Fulton R.E."/>
            <person name="Griffiths-Jones S."/>
            <person name="Harris T.W."/>
            <person name="Hillier L.W."/>
            <person name="Kamath R."/>
            <person name="Kuwabara P.E."/>
            <person name="Mardis E.R."/>
            <person name="Marra M.A."/>
            <person name="Miner T.L."/>
            <person name="Minx P."/>
            <person name="Mullikin J.C."/>
            <person name="Plumb R.W."/>
            <person name="Rogers J."/>
            <person name="Schein J.E."/>
            <person name="Sohrmann M."/>
            <person name="Spieth J."/>
            <person name="Stajich J.E."/>
            <person name="Wei C."/>
            <person name="Willey D."/>
            <person name="Wilson R.K."/>
            <person name="Durbin R.M."/>
            <person name="Waterston R.H."/>
        </authorList>
    </citation>
    <scope>NUCLEOTIDE SEQUENCE [LARGE SCALE GENOMIC DNA]</scope>
    <source>
        <strain>AF16</strain>
    </source>
</reference>
<name>ACH8_CAEBR</name>
<dbReference type="EMBL" id="HE600928">
    <property type="protein sequence ID" value="CAP37920.1"/>
    <property type="molecule type" value="Genomic_DNA"/>
</dbReference>
<dbReference type="SMR" id="Q60S81"/>
<dbReference type="FunCoup" id="Q60S81">
    <property type="interactions" value="9"/>
</dbReference>
<dbReference type="STRING" id="6238.Q60S81"/>
<dbReference type="GlyCosmos" id="Q60S81">
    <property type="glycosylation" value="1 site, No reported glycans"/>
</dbReference>
<dbReference type="EnsemblMetazoa" id="CBG21000.1">
    <property type="protein sequence ID" value="CBG21000.1"/>
    <property type="gene ID" value="WBGene00039891"/>
</dbReference>
<dbReference type="KEGG" id="cbr:CBG_21000"/>
<dbReference type="CTD" id="8573786"/>
<dbReference type="WormBase" id="CBG21000">
    <property type="protein sequence ID" value="CBP37967"/>
    <property type="gene ID" value="WBGene00039891"/>
    <property type="gene designation" value="Cbr-eat-2"/>
</dbReference>
<dbReference type="eggNOG" id="KOG3646">
    <property type="taxonomic scope" value="Eukaryota"/>
</dbReference>
<dbReference type="HOGENOM" id="CLU_018074_1_0_1"/>
<dbReference type="InParanoid" id="Q60S81"/>
<dbReference type="Proteomes" id="UP000008549">
    <property type="component" value="Unassembled WGS sequence"/>
</dbReference>
<dbReference type="GO" id="GO:0005892">
    <property type="term" value="C:acetylcholine-gated channel complex"/>
    <property type="evidence" value="ECO:0000250"/>
    <property type="project" value="UniProtKB"/>
</dbReference>
<dbReference type="GO" id="GO:0043005">
    <property type="term" value="C:neuron projection"/>
    <property type="evidence" value="ECO:0000318"/>
    <property type="project" value="GO_Central"/>
</dbReference>
<dbReference type="GO" id="GO:0005886">
    <property type="term" value="C:plasma membrane"/>
    <property type="evidence" value="ECO:0000250"/>
    <property type="project" value="UniProtKB"/>
</dbReference>
<dbReference type="GO" id="GO:0045211">
    <property type="term" value="C:postsynaptic membrane"/>
    <property type="evidence" value="ECO:0007669"/>
    <property type="project" value="UniProtKB-SubCell"/>
</dbReference>
<dbReference type="GO" id="GO:0045202">
    <property type="term" value="C:synapse"/>
    <property type="evidence" value="ECO:0000318"/>
    <property type="project" value="GO_Central"/>
</dbReference>
<dbReference type="GO" id="GO:0022848">
    <property type="term" value="F:acetylcholine-gated monoatomic cation-selective channel activity"/>
    <property type="evidence" value="ECO:0000250"/>
    <property type="project" value="UniProtKB"/>
</dbReference>
<dbReference type="GO" id="GO:0005231">
    <property type="term" value="F:excitatory extracellular ligand-gated monoatomic ion channel activity"/>
    <property type="evidence" value="ECO:0000318"/>
    <property type="project" value="GO_Central"/>
</dbReference>
<dbReference type="GO" id="GO:0004888">
    <property type="term" value="F:transmembrane signaling receptor activity"/>
    <property type="evidence" value="ECO:0007669"/>
    <property type="project" value="InterPro"/>
</dbReference>
<dbReference type="GO" id="GO:1904315">
    <property type="term" value="F:transmitter-gated monoatomic ion channel activity involved in regulation of postsynaptic membrane potential"/>
    <property type="evidence" value="ECO:0000318"/>
    <property type="project" value="GO_Central"/>
</dbReference>
<dbReference type="GO" id="GO:0007268">
    <property type="term" value="P:chemical synaptic transmission"/>
    <property type="evidence" value="ECO:0000318"/>
    <property type="project" value="GO_Central"/>
</dbReference>
<dbReference type="GO" id="GO:0008340">
    <property type="term" value="P:determination of adult lifespan"/>
    <property type="evidence" value="ECO:0000250"/>
    <property type="project" value="UniProtKB"/>
</dbReference>
<dbReference type="GO" id="GO:0034220">
    <property type="term" value="P:monoatomic ion transmembrane transport"/>
    <property type="evidence" value="ECO:0000318"/>
    <property type="project" value="GO_Central"/>
</dbReference>
<dbReference type="GO" id="GO:0048609">
    <property type="term" value="P:multicellular organismal reproductive process"/>
    <property type="evidence" value="ECO:0000250"/>
    <property type="project" value="UniProtKB"/>
</dbReference>
<dbReference type="GO" id="GO:0043050">
    <property type="term" value="P:nematode pharyngeal pumping"/>
    <property type="evidence" value="ECO:0000250"/>
    <property type="project" value="UniProtKB"/>
</dbReference>
<dbReference type="GO" id="GO:0007274">
    <property type="term" value="P:neuromuscular synaptic transmission"/>
    <property type="evidence" value="ECO:0000250"/>
    <property type="project" value="UniProtKB"/>
</dbReference>
<dbReference type="GO" id="GO:0042391">
    <property type="term" value="P:regulation of membrane potential"/>
    <property type="evidence" value="ECO:0000318"/>
    <property type="project" value="GO_Central"/>
</dbReference>
<dbReference type="CDD" id="cd18997">
    <property type="entry name" value="LGIC_ECD_nAChR"/>
    <property type="match status" value="1"/>
</dbReference>
<dbReference type="CDD" id="cd19051">
    <property type="entry name" value="LGIC_TM_cation"/>
    <property type="match status" value="1"/>
</dbReference>
<dbReference type="FunFam" id="1.20.58.390:FF:000128">
    <property type="entry name" value="Neuronal acetylcholine receptor subunit eat-2"/>
    <property type="match status" value="1"/>
</dbReference>
<dbReference type="FunFam" id="1.20.58.390:FF:000140">
    <property type="entry name" value="Neuronal acetylcholine receptor subunit eat-2"/>
    <property type="match status" value="1"/>
</dbReference>
<dbReference type="FunFam" id="2.70.170.10:FF:000016">
    <property type="entry name" value="Nicotinic acetylcholine receptor subunit"/>
    <property type="match status" value="1"/>
</dbReference>
<dbReference type="Gene3D" id="2.70.170.10">
    <property type="entry name" value="Neurotransmitter-gated ion-channel ligand-binding domain"/>
    <property type="match status" value="1"/>
</dbReference>
<dbReference type="Gene3D" id="1.20.58.390">
    <property type="entry name" value="Neurotransmitter-gated ion-channel transmembrane domain"/>
    <property type="match status" value="2"/>
</dbReference>
<dbReference type="InterPro" id="IPR006202">
    <property type="entry name" value="Neur_chan_lig-bd"/>
</dbReference>
<dbReference type="InterPro" id="IPR036734">
    <property type="entry name" value="Neur_chan_lig-bd_sf"/>
</dbReference>
<dbReference type="InterPro" id="IPR006201">
    <property type="entry name" value="Neur_channel"/>
</dbReference>
<dbReference type="InterPro" id="IPR036719">
    <property type="entry name" value="Neuro-gated_channel_TM_sf"/>
</dbReference>
<dbReference type="InterPro" id="IPR038050">
    <property type="entry name" value="Neuro_actylchol_rec"/>
</dbReference>
<dbReference type="InterPro" id="IPR006029">
    <property type="entry name" value="Neurotrans-gated_channel_TM"/>
</dbReference>
<dbReference type="InterPro" id="IPR018000">
    <property type="entry name" value="Neurotransmitter_ion_chnl_CS"/>
</dbReference>
<dbReference type="InterPro" id="IPR002394">
    <property type="entry name" value="Nicotinic_acetylcholine_rcpt"/>
</dbReference>
<dbReference type="NCBIfam" id="TIGR00860">
    <property type="entry name" value="LIC"/>
    <property type="match status" value="1"/>
</dbReference>
<dbReference type="PANTHER" id="PTHR18945">
    <property type="entry name" value="NEUROTRANSMITTER GATED ION CHANNEL"/>
    <property type="match status" value="1"/>
</dbReference>
<dbReference type="Pfam" id="PF02931">
    <property type="entry name" value="Neur_chan_LBD"/>
    <property type="match status" value="1"/>
</dbReference>
<dbReference type="Pfam" id="PF02932">
    <property type="entry name" value="Neur_chan_memb"/>
    <property type="match status" value="1"/>
</dbReference>
<dbReference type="PRINTS" id="PR00254">
    <property type="entry name" value="NICOTINICR"/>
</dbReference>
<dbReference type="PRINTS" id="PR00252">
    <property type="entry name" value="NRIONCHANNEL"/>
</dbReference>
<dbReference type="SUPFAM" id="SSF90112">
    <property type="entry name" value="Neurotransmitter-gated ion-channel transmembrane pore"/>
    <property type="match status" value="1"/>
</dbReference>
<dbReference type="SUPFAM" id="SSF63712">
    <property type="entry name" value="Nicotinic receptor ligand binding domain-like"/>
    <property type="match status" value="1"/>
</dbReference>
<dbReference type="PROSITE" id="PS00236">
    <property type="entry name" value="NEUROTR_ION_CHANNEL"/>
    <property type="match status" value="1"/>
</dbReference>
<evidence type="ECO:0000250" key="1"/>
<evidence type="ECO:0000250" key="2">
    <source>
        <dbReference type="UniProtKB" id="P22770"/>
    </source>
</evidence>
<evidence type="ECO:0000250" key="3">
    <source>
        <dbReference type="UniProtKB" id="Q9U298"/>
    </source>
</evidence>
<evidence type="ECO:0000255" key="4"/>
<evidence type="ECO:0000256" key="5">
    <source>
        <dbReference type="SAM" id="MobiDB-lite"/>
    </source>
</evidence>
<evidence type="ECO:0000305" key="6"/>
<gene>
    <name evidence="3" type="primary">eat-2</name>
    <name type="ORF">CBG21000</name>
</gene>
<keyword id="KW-1003">Cell membrane</keyword>
<keyword id="KW-1015">Disulfide bond</keyword>
<keyword id="KW-0325">Glycoprotein</keyword>
<keyword id="KW-0407">Ion channel</keyword>
<keyword id="KW-0406">Ion transport</keyword>
<keyword id="KW-1071">Ligand-gated ion channel</keyword>
<keyword id="KW-0472">Membrane</keyword>
<keyword id="KW-0628">Postsynaptic cell membrane</keyword>
<keyword id="KW-0675">Receptor</keyword>
<keyword id="KW-1185">Reference proteome</keyword>
<keyword id="KW-0732">Signal</keyword>
<keyword id="KW-0770">Synapse</keyword>
<keyword id="KW-0812">Transmembrane</keyword>
<keyword id="KW-1133">Transmembrane helix</keyword>
<keyword id="KW-0813">Transport</keyword>
<comment type="function">
    <text evidence="2 3">After binding acetylcholine, the AChR responds by an extensive change in conformation that affects all subunits and leads to opening of an ion-conducting channel across the plasma membrane. Nicotinic acetylcholine receptor in the MC pharyngeal motor neuron involved in pharyngeal pumping. Has a role in the determination of life span possibly via calorific restriction which affects growth rate, although this is independent of metabolic activity (By similarity).</text>
</comment>
<comment type="subunit">
    <text evidence="2">Neuronal AChR seems to be composed of two different type of subunits: alpha and beta.</text>
</comment>
<comment type="subcellular location">
    <subcellularLocation>
        <location evidence="1">Postsynaptic cell membrane</location>
        <topology evidence="1">Multi-pass membrane protein</topology>
    </subcellularLocation>
    <subcellularLocation>
        <location evidence="1">Cell membrane</location>
        <topology evidence="1">Multi-pass membrane protein</topology>
    </subcellularLocation>
    <text evidence="3">MC motor neuron.</text>
</comment>
<comment type="similarity">
    <text evidence="6">Belongs to the ligand-gated ion channel (TC 1.A.9) family. Acetylcholine receptor (TC 1.A.9.1) subfamily.</text>
</comment>
<protein>
    <recommendedName>
        <fullName>Neuronal acetylcholine receptor subunit eat-2</fullName>
    </recommendedName>
</protein>
<sequence>MFLLLQILYILLFLNLADTSDDEYRLLKDLREGYDPMERPVSDHMKPVNVKLRLILQQLVDVDEKNQVITLVVWTQYTWNDYKMKWSPEEYGNITSLQIPFGTLWKPDILLFNSANEHFDSSFPVNMVVSNDGNVLFAPPGIMQFSCSLSMTWFPYDEQVCYLKFGSWTYGKKLDLRIDDADLPEGHKMDLQYYVPNGEFDLISTPAFRKSTTFLDETYVELYFHMHLKRRTMYYGLNWIIPSILISLSNILGFTMPVECGEKVTLQITNFLSIMVFLAMVSEVAPPTSESIPIIAAFFSFAIVILGVSICVSLITVNIFYRHPKMHRMGDWTRYIFLEWLPWFLLMSRPDHVFRKPKREKKKEEEEDEESNAGGKEEESELISQKQQRPRLLVNSQIVMDSTIPYLEEVIGYLKVFKAKLDDDEEEEEEILNWRFMAMVIDRASLFLFTGLIFGTTFVIFAACPNLFSADQIIETEPVIT</sequence>
<accession>Q60S81</accession>
<accession>A8XZ53</accession>
<feature type="signal peptide" evidence="4">
    <location>
        <begin position="1"/>
        <end position="19"/>
    </location>
</feature>
<feature type="chain" id="PRO_0000306252" description="Neuronal acetylcholine receptor subunit eat-2">
    <location>
        <begin position="20"/>
        <end position="481"/>
    </location>
</feature>
<feature type="topological domain" description="Extracellular" evidence="4">
    <location>
        <begin position="20"/>
        <end position="235"/>
    </location>
</feature>
<feature type="transmembrane region" description="Helical" evidence="4">
    <location>
        <begin position="236"/>
        <end position="256"/>
    </location>
</feature>
<feature type="transmembrane region" description="Helical" evidence="4">
    <location>
        <begin position="264"/>
        <end position="284"/>
    </location>
</feature>
<feature type="transmembrane region" description="Helical" evidence="4">
    <location>
        <begin position="292"/>
        <end position="312"/>
    </location>
</feature>
<feature type="topological domain" description="Cytoplasmic" evidence="4">
    <location>
        <begin position="313"/>
        <end position="443"/>
    </location>
</feature>
<feature type="transmembrane region" description="Helical" evidence="4">
    <location>
        <begin position="444"/>
        <end position="464"/>
    </location>
</feature>
<feature type="region of interest" description="Disordered" evidence="5">
    <location>
        <begin position="356"/>
        <end position="384"/>
    </location>
</feature>
<feature type="glycosylation site" description="N-linked (GlcNAc...) asparagine" evidence="4">
    <location>
        <position position="93"/>
    </location>
</feature>
<feature type="disulfide bond" evidence="2">
    <location>
        <begin position="147"/>
        <end position="161"/>
    </location>
</feature>
<organism>
    <name type="scientific">Caenorhabditis briggsae</name>
    <dbReference type="NCBI Taxonomy" id="6238"/>
    <lineage>
        <taxon>Eukaryota</taxon>
        <taxon>Metazoa</taxon>
        <taxon>Ecdysozoa</taxon>
        <taxon>Nematoda</taxon>
        <taxon>Chromadorea</taxon>
        <taxon>Rhabditida</taxon>
        <taxon>Rhabditina</taxon>
        <taxon>Rhabditomorpha</taxon>
        <taxon>Rhabditoidea</taxon>
        <taxon>Rhabditidae</taxon>
        <taxon>Peloderinae</taxon>
        <taxon>Caenorhabditis</taxon>
    </lineage>
</organism>
<proteinExistence type="inferred from homology"/>